<reference key="1">
    <citation type="submission" date="2007-04" db="EMBL/GenBank/DDBJ databases">
        <title>Complete sequence of Roseiflexus sp. RS-1.</title>
        <authorList>
            <consortium name="US DOE Joint Genome Institute"/>
            <person name="Copeland A."/>
            <person name="Lucas S."/>
            <person name="Lapidus A."/>
            <person name="Barry K."/>
            <person name="Detter J.C."/>
            <person name="Glavina del Rio T."/>
            <person name="Hammon N."/>
            <person name="Israni S."/>
            <person name="Dalin E."/>
            <person name="Tice H."/>
            <person name="Pitluck S."/>
            <person name="Chertkov O."/>
            <person name="Brettin T."/>
            <person name="Bruce D."/>
            <person name="Han C."/>
            <person name="Schmutz J."/>
            <person name="Larimer F."/>
            <person name="Land M."/>
            <person name="Hauser L."/>
            <person name="Kyrpides N."/>
            <person name="Mikhailova N."/>
            <person name="Bryant D.A."/>
            <person name="Richardson P."/>
        </authorList>
    </citation>
    <scope>NUCLEOTIDE SEQUENCE [LARGE SCALE GENOMIC DNA]</scope>
    <source>
        <strain>RS-1</strain>
    </source>
</reference>
<evidence type="ECO:0000255" key="1">
    <source>
        <dbReference type="HAMAP-Rule" id="MF_00168"/>
    </source>
</evidence>
<name>TGT_ROSS1</name>
<keyword id="KW-0328">Glycosyltransferase</keyword>
<keyword id="KW-0479">Metal-binding</keyword>
<keyword id="KW-0671">Queuosine biosynthesis</keyword>
<keyword id="KW-0808">Transferase</keyword>
<keyword id="KW-0819">tRNA processing</keyword>
<keyword id="KW-0862">Zinc</keyword>
<comment type="function">
    <text evidence="1">Catalyzes the base-exchange of a guanine (G) residue with the queuine precursor 7-aminomethyl-7-deazaguanine (PreQ1) at position 34 (anticodon wobble position) in tRNAs with GU(N) anticodons (tRNA-Asp, -Asn, -His and -Tyr). Catalysis occurs through a double-displacement mechanism. The nucleophile active site attacks the C1' of nucleotide 34 to detach the guanine base from the RNA, forming a covalent enzyme-RNA intermediate. The proton acceptor active site deprotonates the incoming PreQ1, allowing a nucleophilic attack on the C1' of the ribose to form the product. After dissociation, two additional enzymatic reactions on the tRNA convert PreQ1 to queuine (Q), resulting in the hypermodified nucleoside queuosine (7-(((4,5-cis-dihydroxy-2-cyclopenten-1-yl)amino)methyl)-7-deazaguanosine).</text>
</comment>
<comment type="catalytic activity">
    <reaction evidence="1">
        <text>7-aminomethyl-7-carbaguanine + guanosine(34) in tRNA = 7-aminomethyl-7-carbaguanosine(34) in tRNA + guanine</text>
        <dbReference type="Rhea" id="RHEA:24104"/>
        <dbReference type="Rhea" id="RHEA-COMP:10341"/>
        <dbReference type="Rhea" id="RHEA-COMP:10342"/>
        <dbReference type="ChEBI" id="CHEBI:16235"/>
        <dbReference type="ChEBI" id="CHEBI:58703"/>
        <dbReference type="ChEBI" id="CHEBI:74269"/>
        <dbReference type="ChEBI" id="CHEBI:82833"/>
        <dbReference type="EC" id="2.4.2.29"/>
    </reaction>
</comment>
<comment type="cofactor">
    <cofactor evidence="1">
        <name>Zn(2+)</name>
        <dbReference type="ChEBI" id="CHEBI:29105"/>
    </cofactor>
    <text evidence="1">Binds 1 zinc ion per subunit.</text>
</comment>
<comment type="pathway">
    <text evidence="1">tRNA modification; tRNA-queuosine biosynthesis.</text>
</comment>
<comment type="subunit">
    <text evidence="1">Homodimer. Within each dimer, one monomer is responsible for RNA recognition and catalysis, while the other monomer binds to the replacement base PreQ1.</text>
</comment>
<comment type="similarity">
    <text evidence="1">Belongs to the queuine tRNA-ribosyltransferase family.</text>
</comment>
<accession>A5USV3</accession>
<proteinExistence type="inferred from homology"/>
<dbReference type="EC" id="2.4.2.29" evidence="1"/>
<dbReference type="EMBL" id="CP000686">
    <property type="protein sequence ID" value="ABQ89706.1"/>
    <property type="molecule type" value="Genomic_DNA"/>
</dbReference>
<dbReference type="RefSeq" id="WP_011956058.1">
    <property type="nucleotide sequence ID" value="NC_009523.1"/>
</dbReference>
<dbReference type="SMR" id="A5USV3"/>
<dbReference type="STRING" id="357808.RoseRS_1302"/>
<dbReference type="KEGG" id="rrs:RoseRS_1302"/>
<dbReference type="eggNOG" id="COG0343">
    <property type="taxonomic scope" value="Bacteria"/>
</dbReference>
<dbReference type="HOGENOM" id="CLU_022060_0_1_0"/>
<dbReference type="OrthoDB" id="9805417at2"/>
<dbReference type="UniPathway" id="UPA00392"/>
<dbReference type="Proteomes" id="UP000006554">
    <property type="component" value="Chromosome"/>
</dbReference>
<dbReference type="GO" id="GO:0005829">
    <property type="term" value="C:cytosol"/>
    <property type="evidence" value="ECO:0007669"/>
    <property type="project" value="TreeGrafter"/>
</dbReference>
<dbReference type="GO" id="GO:0046872">
    <property type="term" value="F:metal ion binding"/>
    <property type="evidence" value="ECO:0007669"/>
    <property type="project" value="UniProtKB-KW"/>
</dbReference>
<dbReference type="GO" id="GO:0008479">
    <property type="term" value="F:tRNA-guanosine(34) queuine transglycosylase activity"/>
    <property type="evidence" value="ECO:0007669"/>
    <property type="project" value="UniProtKB-UniRule"/>
</dbReference>
<dbReference type="GO" id="GO:0008616">
    <property type="term" value="P:queuosine biosynthetic process"/>
    <property type="evidence" value="ECO:0007669"/>
    <property type="project" value="UniProtKB-UniRule"/>
</dbReference>
<dbReference type="GO" id="GO:0002099">
    <property type="term" value="P:tRNA wobble guanine modification"/>
    <property type="evidence" value="ECO:0007669"/>
    <property type="project" value="TreeGrafter"/>
</dbReference>
<dbReference type="GO" id="GO:0101030">
    <property type="term" value="P:tRNA-guanine transglycosylation"/>
    <property type="evidence" value="ECO:0007669"/>
    <property type="project" value="InterPro"/>
</dbReference>
<dbReference type="Gene3D" id="3.20.20.105">
    <property type="entry name" value="Queuine tRNA-ribosyltransferase-like"/>
    <property type="match status" value="1"/>
</dbReference>
<dbReference type="HAMAP" id="MF_00168">
    <property type="entry name" value="Q_tRNA_Tgt"/>
    <property type="match status" value="1"/>
</dbReference>
<dbReference type="InterPro" id="IPR050076">
    <property type="entry name" value="ArchSynthase1/Queuine_TRR"/>
</dbReference>
<dbReference type="InterPro" id="IPR004803">
    <property type="entry name" value="TGT"/>
</dbReference>
<dbReference type="InterPro" id="IPR036511">
    <property type="entry name" value="TGT-like_sf"/>
</dbReference>
<dbReference type="InterPro" id="IPR002616">
    <property type="entry name" value="tRNA_ribo_trans-like"/>
</dbReference>
<dbReference type="NCBIfam" id="TIGR00430">
    <property type="entry name" value="Q_tRNA_tgt"/>
    <property type="match status" value="1"/>
</dbReference>
<dbReference type="NCBIfam" id="TIGR00449">
    <property type="entry name" value="tgt_general"/>
    <property type="match status" value="1"/>
</dbReference>
<dbReference type="PANTHER" id="PTHR46499">
    <property type="entry name" value="QUEUINE TRNA-RIBOSYLTRANSFERASE"/>
    <property type="match status" value="1"/>
</dbReference>
<dbReference type="PANTHER" id="PTHR46499:SF1">
    <property type="entry name" value="QUEUINE TRNA-RIBOSYLTRANSFERASE"/>
    <property type="match status" value="1"/>
</dbReference>
<dbReference type="Pfam" id="PF01702">
    <property type="entry name" value="TGT"/>
    <property type="match status" value="1"/>
</dbReference>
<dbReference type="SUPFAM" id="SSF51713">
    <property type="entry name" value="tRNA-guanine transglycosylase"/>
    <property type="match status" value="1"/>
</dbReference>
<feature type="chain" id="PRO_1000016840" description="Queuine tRNA-ribosyltransferase">
    <location>
        <begin position="1"/>
        <end position="400"/>
    </location>
</feature>
<feature type="region of interest" description="RNA binding" evidence="1">
    <location>
        <begin position="277"/>
        <end position="283"/>
    </location>
</feature>
<feature type="region of interest" description="RNA binding; important for wobble base 34 recognition" evidence="1">
    <location>
        <begin position="301"/>
        <end position="305"/>
    </location>
</feature>
<feature type="active site" description="Proton acceptor" evidence="1">
    <location>
        <position position="93"/>
    </location>
</feature>
<feature type="active site" description="Nucleophile" evidence="1">
    <location>
        <position position="296"/>
    </location>
</feature>
<feature type="binding site" evidence="1">
    <location>
        <begin position="93"/>
        <end position="97"/>
    </location>
    <ligand>
        <name>substrate</name>
    </ligand>
</feature>
<feature type="binding site" evidence="1">
    <location>
        <position position="166"/>
    </location>
    <ligand>
        <name>substrate</name>
    </ligand>
</feature>
<feature type="binding site" evidence="1">
    <location>
        <position position="247"/>
    </location>
    <ligand>
        <name>substrate</name>
    </ligand>
</feature>
<feature type="binding site" evidence="1">
    <location>
        <position position="338"/>
    </location>
    <ligand>
        <name>Zn(2+)</name>
        <dbReference type="ChEBI" id="CHEBI:29105"/>
    </ligand>
</feature>
<feature type="binding site" evidence="1">
    <location>
        <position position="340"/>
    </location>
    <ligand>
        <name>Zn(2+)</name>
        <dbReference type="ChEBI" id="CHEBI:29105"/>
    </ligand>
</feature>
<feature type="binding site" evidence="1">
    <location>
        <position position="343"/>
    </location>
    <ligand>
        <name>Zn(2+)</name>
        <dbReference type="ChEBI" id="CHEBI:29105"/>
    </ligand>
</feature>
<feature type="binding site" evidence="1">
    <location>
        <position position="369"/>
    </location>
    <ligand>
        <name>Zn(2+)</name>
        <dbReference type="ChEBI" id="CHEBI:29105"/>
    </ligand>
</feature>
<gene>
    <name evidence="1" type="primary">tgt</name>
    <name type="ordered locus">RoseRS_1302</name>
</gene>
<sequence length="400" mass="44975">MTLAFDIEARDPHSRARAGRITTAHGVIETPVFMPVGTRGSIKSLTPDEVRNHGAQIILGNTYHLYLQPGHELIARMGGLHHFMGWDGPILTDSGGFQVFSLVYGGIADEIKGRRPTQQVQPGMVKVTDDAVIFKSYIDGSMHVFTPERSIEIQKGIGADIILCFDELPPFHAGYDYTARSLERTHAWERRCLMFHRATQEGGLPFVPPNPYQALFGIVHGGVFPDLRRASAEYLRELPFDGLCIGGSLGENKQQMREVVDMTVPHMPDHLPRHLLGIGDVDDLIECVARGIDMFDCVSPTRLGRHGTALVRDAERRWKLNVANAALRDDPTPLDAWCDCYTCRRYSRAYIHHLFRAQELLGIRLVSLHNVAFLLKLMRTIRQSIIEGRFAHLRAEWLGI</sequence>
<organism>
    <name type="scientific">Roseiflexus sp. (strain RS-1)</name>
    <dbReference type="NCBI Taxonomy" id="357808"/>
    <lineage>
        <taxon>Bacteria</taxon>
        <taxon>Bacillati</taxon>
        <taxon>Chloroflexota</taxon>
        <taxon>Chloroflexia</taxon>
        <taxon>Chloroflexales</taxon>
        <taxon>Roseiflexineae</taxon>
        <taxon>Roseiflexaceae</taxon>
        <taxon>Roseiflexus</taxon>
    </lineage>
</organism>
<protein>
    <recommendedName>
        <fullName evidence="1">Queuine tRNA-ribosyltransferase</fullName>
        <ecNumber evidence="1">2.4.2.29</ecNumber>
    </recommendedName>
    <alternativeName>
        <fullName evidence="1">Guanine insertion enzyme</fullName>
    </alternativeName>
    <alternativeName>
        <fullName evidence="1">tRNA-guanine transglycosylase</fullName>
    </alternativeName>
</protein>